<protein>
    <recommendedName>
        <fullName evidence="1">Large ribosomal subunit protein bL12</fullName>
    </recommendedName>
    <alternativeName>
        <fullName evidence="2">50S ribosomal protein L7/L12</fullName>
    </alternativeName>
</protein>
<evidence type="ECO:0000255" key="1">
    <source>
        <dbReference type="HAMAP-Rule" id="MF_00368"/>
    </source>
</evidence>
<evidence type="ECO:0000305" key="2"/>
<accession>B3DPX4</accession>
<organism>
    <name type="scientific">Bifidobacterium longum (strain DJO10A)</name>
    <dbReference type="NCBI Taxonomy" id="205913"/>
    <lineage>
        <taxon>Bacteria</taxon>
        <taxon>Bacillati</taxon>
        <taxon>Actinomycetota</taxon>
        <taxon>Actinomycetes</taxon>
        <taxon>Bifidobacteriales</taxon>
        <taxon>Bifidobacteriaceae</taxon>
        <taxon>Bifidobacterium</taxon>
    </lineage>
</organism>
<reference key="1">
    <citation type="journal article" date="2008" name="BMC Genomics">
        <title>Comparative genomic analysis of the gut bacterium Bifidobacterium longum reveals loci susceptible to deletion during pure culture growth.</title>
        <authorList>
            <person name="Lee J.H."/>
            <person name="Karamychev V.N."/>
            <person name="Kozyavkin S.A."/>
            <person name="Mills D."/>
            <person name="Pavlov A.R."/>
            <person name="Pavlova N.V."/>
            <person name="Polouchine N.N."/>
            <person name="Richardson P.M."/>
            <person name="Shakhova V.V."/>
            <person name="Slesarev A.I."/>
            <person name="Weimer B."/>
            <person name="O'Sullivan D.J."/>
        </authorList>
    </citation>
    <scope>NUCLEOTIDE SEQUENCE [LARGE SCALE GENOMIC DNA]</scope>
    <source>
        <strain>DJO10A</strain>
    </source>
</reference>
<comment type="function">
    <text evidence="1">Forms part of the ribosomal stalk which helps the ribosome interact with GTP-bound translation factors. Is thus essential for accurate translation.</text>
</comment>
<comment type="subunit">
    <text evidence="1">Homodimer. Part of the ribosomal stalk of the 50S ribosomal subunit. Forms a multimeric L10(L12)X complex, where L10 forms an elongated spine to which 2 to 4 L12 dimers bind in a sequential fashion. Binds GTP-bound translation factors.</text>
</comment>
<comment type="similarity">
    <text evidence="1">Belongs to the bacterial ribosomal protein bL12 family.</text>
</comment>
<proteinExistence type="inferred from homology"/>
<sequence>MAKYTNDELLEAFGEMTLVELSEFVKAFEEKFDVEAAAPVAAVAAVAGAAAPAEEEKDEFDVILSAVGDKKIQVIKAVRAITNLGLAEAKALVDGAPKAVLEKAKKEDAEKAKAQLEEAGASVELK</sequence>
<gene>
    <name evidence="1" type="primary">rplL</name>
    <name type="ordered locus">BLD_1668</name>
</gene>
<dbReference type="EMBL" id="CP000605">
    <property type="protein sequence ID" value="ACD99113.1"/>
    <property type="molecule type" value="Genomic_DNA"/>
</dbReference>
<dbReference type="RefSeq" id="WP_007053002.1">
    <property type="nucleotide sequence ID" value="NZ_AABM02000021.1"/>
</dbReference>
<dbReference type="SMR" id="B3DPX4"/>
<dbReference type="GeneID" id="69578931"/>
<dbReference type="KEGG" id="blj:BLD_1668"/>
<dbReference type="HOGENOM" id="CLU_086499_3_0_11"/>
<dbReference type="Proteomes" id="UP000002419">
    <property type="component" value="Chromosome"/>
</dbReference>
<dbReference type="GO" id="GO:0022625">
    <property type="term" value="C:cytosolic large ribosomal subunit"/>
    <property type="evidence" value="ECO:0007669"/>
    <property type="project" value="TreeGrafter"/>
</dbReference>
<dbReference type="GO" id="GO:0003729">
    <property type="term" value="F:mRNA binding"/>
    <property type="evidence" value="ECO:0007669"/>
    <property type="project" value="TreeGrafter"/>
</dbReference>
<dbReference type="GO" id="GO:0003735">
    <property type="term" value="F:structural constituent of ribosome"/>
    <property type="evidence" value="ECO:0007669"/>
    <property type="project" value="InterPro"/>
</dbReference>
<dbReference type="GO" id="GO:0006412">
    <property type="term" value="P:translation"/>
    <property type="evidence" value="ECO:0007669"/>
    <property type="project" value="UniProtKB-UniRule"/>
</dbReference>
<dbReference type="CDD" id="cd00387">
    <property type="entry name" value="Ribosomal_L7_L12"/>
    <property type="match status" value="1"/>
</dbReference>
<dbReference type="FunFam" id="3.30.1390.10:FF:000001">
    <property type="entry name" value="50S ribosomal protein L7/L12"/>
    <property type="match status" value="1"/>
</dbReference>
<dbReference type="Gene3D" id="3.30.1390.10">
    <property type="match status" value="1"/>
</dbReference>
<dbReference type="Gene3D" id="1.20.5.710">
    <property type="entry name" value="Single helix bin"/>
    <property type="match status" value="1"/>
</dbReference>
<dbReference type="HAMAP" id="MF_00368">
    <property type="entry name" value="Ribosomal_bL12"/>
    <property type="match status" value="1"/>
</dbReference>
<dbReference type="InterPro" id="IPR000206">
    <property type="entry name" value="Ribosomal_bL12"/>
</dbReference>
<dbReference type="InterPro" id="IPR013823">
    <property type="entry name" value="Ribosomal_bL12_C"/>
</dbReference>
<dbReference type="InterPro" id="IPR014719">
    <property type="entry name" value="Ribosomal_bL12_C/ClpS-like"/>
</dbReference>
<dbReference type="InterPro" id="IPR008932">
    <property type="entry name" value="Ribosomal_bL12_oligo"/>
</dbReference>
<dbReference type="InterPro" id="IPR036235">
    <property type="entry name" value="Ribosomal_bL12_oligo_N_sf"/>
</dbReference>
<dbReference type="NCBIfam" id="TIGR00855">
    <property type="entry name" value="L12"/>
    <property type="match status" value="1"/>
</dbReference>
<dbReference type="PANTHER" id="PTHR45987">
    <property type="entry name" value="39S RIBOSOMAL PROTEIN L12"/>
    <property type="match status" value="1"/>
</dbReference>
<dbReference type="PANTHER" id="PTHR45987:SF4">
    <property type="entry name" value="LARGE RIBOSOMAL SUBUNIT PROTEIN BL12M"/>
    <property type="match status" value="1"/>
</dbReference>
<dbReference type="Pfam" id="PF00542">
    <property type="entry name" value="Ribosomal_L12"/>
    <property type="match status" value="1"/>
</dbReference>
<dbReference type="Pfam" id="PF16320">
    <property type="entry name" value="Ribosomal_L12_N"/>
    <property type="match status" value="1"/>
</dbReference>
<dbReference type="SUPFAM" id="SSF54736">
    <property type="entry name" value="ClpS-like"/>
    <property type="match status" value="1"/>
</dbReference>
<dbReference type="SUPFAM" id="SSF48300">
    <property type="entry name" value="Ribosomal protein L7/12, oligomerisation (N-terminal) domain"/>
    <property type="match status" value="1"/>
</dbReference>
<name>RL7_BIFLD</name>
<keyword id="KW-0687">Ribonucleoprotein</keyword>
<keyword id="KW-0689">Ribosomal protein</keyword>
<feature type="chain" id="PRO_1000121394" description="Large ribosomal subunit protein bL12">
    <location>
        <begin position="1"/>
        <end position="126"/>
    </location>
</feature>